<accession>Q72HF4</accession>
<protein>
    <recommendedName>
        <fullName evidence="1">Glutamine--fructose-6-phosphate aminotransferase [isomerizing]</fullName>
        <ecNumber evidence="1">2.6.1.16</ecNumber>
    </recommendedName>
    <alternativeName>
        <fullName evidence="1">D-fructose-6-phosphate amidotransferase</fullName>
    </alternativeName>
    <alternativeName>
        <fullName evidence="1">GFAT</fullName>
    </alternativeName>
    <alternativeName>
        <fullName evidence="1">Glucosamine-6-phosphate synthase</fullName>
    </alternativeName>
    <alternativeName>
        <fullName evidence="1">Hexosephosphate aminotransferase</fullName>
    </alternativeName>
    <alternativeName>
        <fullName evidence="1">L-glutamine--D-fructose-6-phosphate amidotransferase</fullName>
    </alternativeName>
</protein>
<gene>
    <name evidence="1" type="primary">glmS</name>
    <name type="ordered locus">TT_C1533</name>
</gene>
<name>GLMS_THET2</name>
<organism>
    <name type="scientific">Thermus thermophilus (strain ATCC BAA-163 / DSM 7039 / HB27)</name>
    <dbReference type="NCBI Taxonomy" id="262724"/>
    <lineage>
        <taxon>Bacteria</taxon>
        <taxon>Thermotogati</taxon>
        <taxon>Deinococcota</taxon>
        <taxon>Deinococci</taxon>
        <taxon>Thermales</taxon>
        <taxon>Thermaceae</taxon>
        <taxon>Thermus</taxon>
    </lineage>
</organism>
<keyword id="KW-0032">Aminotransferase</keyword>
<keyword id="KW-0963">Cytoplasm</keyword>
<keyword id="KW-0315">Glutamine amidotransferase</keyword>
<keyword id="KW-0677">Repeat</keyword>
<keyword id="KW-0808">Transferase</keyword>
<comment type="function">
    <text evidence="1">Catalyzes the first step in hexosamine metabolism, converting fructose-6P into glucosamine-6P using glutamine as a nitrogen source.</text>
</comment>
<comment type="catalytic activity">
    <reaction evidence="1">
        <text>D-fructose 6-phosphate + L-glutamine = D-glucosamine 6-phosphate + L-glutamate</text>
        <dbReference type="Rhea" id="RHEA:13237"/>
        <dbReference type="ChEBI" id="CHEBI:29985"/>
        <dbReference type="ChEBI" id="CHEBI:58359"/>
        <dbReference type="ChEBI" id="CHEBI:58725"/>
        <dbReference type="ChEBI" id="CHEBI:61527"/>
        <dbReference type="EC" id="2.6.1.16"/>
    </reaction>
</comment>
<comment type="subunit">
    <text evidence="1">Homodimer.</text>
</comment>
<comment type="subcellular location">
    <subcellularLocation>
        <location evidence="1">Cytoplasm</location>
    </subcellularLocation>
</comment>
<reference key="1">
    <citation type="journal article" date="2004" name="Nat. Biotechnol.">
        <title>The genome sequence of the extreme thermophile Thermus thermophilus.</title>
        <authorList>
            <person name="Henne A."/>
            <person name="Brueggemann H."/>
            <person name="Raasch C."/>
            <person name="Wiezer A."/>
            <person name="Hartsch T."/>
            <person name="Liesegang H."/>
            <person name="Johann A."/>
            <person name="Lienard T."/>
            <person name="Gohl O."/>
            <person name="Martinez-Arias R."/>
            <person name="Jacobi C."/>
            <person name="Starkuviene V."/>
            <person name="Schlenczeck S."/>
            <person name="Dencker S."/>
            <person name="Huber R."/>
            <person name="Klenk H.-P."/>
            <person name="Kramer W."/>
            <person name="Merkl R."/>
            <person name="Gottschalk G."/>
            <person name="Fritz H.-J."/>
        </authorList>
    </citation>
    <scope>NUCLEOTIDE SEQUENCE [LARGE SCALE GENOMIC DNA]</scope>
    <source>
        <strain>ATCC BAA-163 / DSM 7039 / HB27</strain>
    </source>
</reference>
<evidence type="ECO:0000255" key="1">
    <source>
        <dbReference type="HAMAP-Rule" id="MF_00164"/>
    </source>
</evidence>
<feature type="initiator methionine" description="Removed" evidence="1">
    <location>
        <position position="1"/>
    </location>
</feature>
<feature type="chain" id="PRO_0000135401" description="Glutamine--fructose-6-phosphate aminotransferase [isomerizing]">
    <location>
        <begin position="2"/>
        <end position="604"/>
    </location>
</feature>
<feature type="domain" description="Glutamine amidotransferase type-2" evidence="1">
    <location>
        <begin position="2"/>
        <end position="216"/>
    </location>
</feature>
<feature type="domain" description="SIS 1" evidence="1">
    <location>
        <begin position="281"/>
        <end position="420"/>
    </location>
</feature>
<feature type="domain" description="SIS 2" evidence="1">
    <location>
        <begin position="453"/>
        <end position="594"/>
    </location>
</feature>
<feature type="active site" description="Nucleophile; for GATase activity" evidence="1">
    <location>
        <position position="2"/>
    </location>
</feature>
<feature type="active site" description="For Fru-6P isomerization activity" evidence="1">
    <location>
        <position position="599"/>
    </location>
</feature>
<dbReference type="EC" id="2.6.1.16" evidence="1"/>
<dbReference type="EMBL" id="AE017221">
    <property type="protein sequence ID" value="AAS81875.1"/>
    <property type="molecule type" value="Genomic_DNA"/>
</dbReference>
<dbReference type="RefSeq" id="WP_011173907.1">
    <property type="nucleotide sequence ID" value="NC_005835.1"/>
</dbReference>
<dbReference type="SMR" id="Q72HF4"/>
<dbReference type="KEGG" id="tth:TT_C1533"/>
<dbReference type="eggNOG" id="COG0449">
    <property type="taxonomic scope" value="Bacteria"/>
</dbReference>
<dbReference type="HOGENOM" id="CLU_012520_5_2_0"/>
<dbReference type="OrthoDB" id="106547at2"/>
<dbReference type="Proteomes" id="UP000000592">
    <property type="component" value="Chromosome"/>
</dbReference>
<dbReference type="GO" id="GO:0005829">
    <property type="term" value="C:cytosol"/>
    <property type="evidence" value="ECO:0007669"/>
    <property type="project" value="TreeGrafter"/>
</dbReference>
<dbReference type="GO" id="GO:0097367">
    <property type="term" value="F:carbohydrate derivative binding"/>
    <property type="evidence" value="ECO:0007669"/>
    <property type="project" value="InterPro"/>
</dbReference>
<dbReference type="GO" id="GO:0004360">
    <property type="term" value="F:glutamine-fructose-6-phosphate transaminase (isomerizing) activity"/>
    <property type="evidence" value="ECO:0007669"/>
    <property type="project" value="UniProtKB-UniRule"/>
</dbReference>
<dbReference type="GO" id="GO:0005975">
    <property type="term" value="P:carbohydrate metabolic process"/>
    <property type="evidence" value="ECO:0007669"/>
    <property type="project" value="UniProtKB-UniRule"/>
</dbReference>
<dbReference type="GO" id="GO:0006002">
    <property type="term" value="P:fructose 6-phosphate metabolic process"/>
    <property type="evidence" value="ECO:0007669"/>
    <property type="project" value="TreeGrafter"/>
</dbReference>
<dbReference type="GO" id="GO:0006487">
    <property type="term" value="P:protein N-linked glycosylation"/>
    <property type="evidence" value="ECO:0007669"/>
    <property type="project" value="TreeGrafter"/>
</dbReference>
<dbReference type="GO" id="GO:0006047">
    <property type="term" value="P:UDP-N-acetylglucosamine metabolic process"/>
    <property type="evidence" value="ECO:0007669"/>
    <property type="project" value="TreeGrafter"/>
</dbReference>
<dbReference type="CDD" id="cd00714">
    <property type="entry name" value="GFAT"/>
    <property type="match status" value="1"/>
</dbReference>
<dbReference type="CDD" id="cd05008">
    <property type="entry name" value="SIS_GlmS_GlmD_1"/>
    <property type="match status" value="1"/>
</dbReference>
<dbReference type="CDD" id="cd05009">
    <property type="entry name" value="SIS_GlmS_GlmD_2"/>
    <property type="match status" value="1"/>
</dbReference>
<dbReference type="FunFam" id="3.40.50.10490:FF:000001">
    <property type="entry name" value="Glutamine--fructose-6-phosphate aminotransferase [isomerizing]"/>
    <property type="match status" value="1"/>
</dbReference>
<dbReference type="FunFam" id="3.60.20.10:FF:000006">
    <property type="entry name" value="Glutamine--fructose-6-phosphate aminotransferase [isomerizing]"/>
    <property type="match status" value="1"/>
</dbReference>
<dbReference type="Gene3D" id="3.40.50.10490">
    <property type="entry name" value="Glucose-6-phosphate isomerase like protein, domain 1"/>
    <property type="match status" value="2"/>
</dbReference>
<dbReference type="Gene3D" id="3.60.20.10">
    <property type="entry name" value="Glutamine Phosphoribosylpyrophosphate, subunit 1, domain 1"/>
    <property type="match status" value="1"/>
</dbReference>
<dbReference type="HAMAP" id="MF_00164">
    <property type="entry name" value="GlmS"/>
    <property type="match status" value="1"/>
</dbReference>
<dbReference type="InterPro" id="IPR017932">
    <property type="entry name" value="GATase_2_dom"/>
</dbReference>
<dbReference type="InterPro" id="IPR005855">
    <property type="entry name" value="GFAT"/>
</dbReference>
<dbReference type="InterPro" id="IPR047084">
    <property type="entry name" value="GFAT_N"/>
</dbReference>
<dbReference type="InterPro" id="IPR035466">
    <property type="entry name" value="GlmS/AgaS_SIS"/>
</dbReference>
<dbReference type="InterPro" id="IPR035490">
    <property type="entry name" value="GlmS/FrlB_SIS"/>
</dbReference>
<dbReference type="InterPro" id="IPR029055">
    <property type="entry name" value="Ntn_hydrolases_N"/>
</dbReference>
<dbReference type="InterPro" id="IPR001347">
    <property type="entry name" value="SIS_dom"/>
</dbReference>
<dbReference type="InterPro" id="IPR046348">
    <property type="entry name" value="SIS_dom_sf"/>
</dbReference>
<dbReference type="NCBIfam" id="TIGR01135">
    <property type="entry name" value="glmS"/>
    <property type="match status" value="1"/>
</dbReference>
<dbReference type="NCBIfam" id="NF001484">
    <property type="entry name" value="PRK00331.1"/>
    <property type="match status" value="1"/>
</dbReference>
<dbReference type="PANTHER" id="PTHR10937">
    <property type="entry name" value="GLUCOSAMINE--FRUCTOSE-6-PHOSPHATE AMINOTRANSFERASE, ISOMERIZING"/>
    <property type="match status" value="1"/>
</dbReference>
<dbReference type="PANTHER" id="PTHR10937:SF0">
    <property type="entry name" value="GLUTAMINE--FRUCTOSE-6-PHOSPHATE TRANSAMINASE (ISOMERIZING)"/>
    <property type="match status" value="1"/>
</dbReference>
<dbReference type="Pfam" id="PF13522">
    <property type="entry name" value="GATase_6"/>
    <property type="match status" value="1"/>
</dbReference>
<dbReference type="Pfam" id="PF01380">
    <property type="entry name" value="SIS"/>
    <property type="match status" value="2"/>
</dbReference>
<dbReference type="SUPFAM" id="SSF56235">
    <property type="entry name" value="N-terminal nucleophile aminohydrolases (Ntn hydrolases)"/>
    <property type="match status" value="1"/>
</dbReference>
<dbReference type="SUPFAM" id="SSF53697">
    <property type="entry name" value="SIS domain"/>
    <property type="match status" value="1"/>
</dbReference>
<dbReference type="PROSITE" id="PS51278">
    <property type="entry name" value="GATASE_TYPE_2"/>
    <property type="match status" value="1"/>
</dbReference>
<dbReference type="PROSITE" id="PS51464">
    <property type="entry name" value="SIS"/>
    <property type="match status" value="2"/>
</dbReference>
<sequence length="604" mass="66457">MCGIVGYVGFRNATDVLLDGLRRLEYRGYDSAGIAVRTPEGLKVVKRSGKLSALAQAVGKTPLQGALGIGHTRWATHGAPTDPNAHPHTTEDGRIALIHNGIFENYLELKEALEARGHRFRSETDTEVLAHLLEETYRGDLLEALREALKAVRGAYAVVVAHEDHEEIVAARTVSPLVVGLGEGENFLASDVPALLPYTRRVIFLHDGDVVRLTREGVEITDLEGRPVQREAVEVDWTLEAAEKGGFPHYMLKEIYEQPWVLENTLGGRLREEEGTVELGLALDPREVDRVHVIACGTASYAGLYGKYLLETLARLPTEWDVASEYRYRDPVVDSRTLALAISQSGETIDTLEGLREAKRKGARSLGVINAKGSTLTREVEDVLYIHAGPEIGVASTKAYTAMLVAMALLAVWFGRARGALALEEAQSLLREMRRLPRLVEEVLEKRPLVAHVAEKYHQARDFLFLGRHVQAPTAYEGALKLKEISYIHAEAYPAGEMKHGPIALIDEHLPVVVLATKGPLYEKTLSNIQEVRARGGKVIAIATEGDEEIPRLAQDVIYVPEVHPLLAPIVSVVPLQLLAYEIAVLLGRDVDQPRNLAKSVTVE</sequence>
<proteinExistence type="inferred from homology"/>